<gene>
    <name type="primary">mug74</name>
    <name type="ORF">SPAC16A10.08c</name>
    <name type="ORF">SPAC589.01c</name>
</gene>
<evidence type="ECO:0000269" key="1">
    <source>
    </source>
</evidence>
<evidence type="ECO:0000269" key="2">
    <source>
    </source>
</evidence>
<reference key="1">
    <citation type="journal article" date="2002" name="Nature">
        <title>The genome sequence of Schizosaccharomyces pombe.</title>
        <authorList>
            <person name="Wood V."/>
            <person name="Gwilliam R."/>
            <person name="Rajandream M.A."/>
            <person name="Lyne M.H."/>
            <person name="Lyne R."/>
            <person name="Stewart A."/>
            <person name="Sgouros J.G."/>
            <person name="Peat N."/>
            <person name="Hayles J."/>
            <person name="Baker S.G."/>
            <person name="Basham D."/>
            <person name="Bowman S."/>
            <person name="Brooks K."/>
            <person name="Brown D."/>
            <person name="Brown S."/>
            <person name="Chillingworth T."/>
            <person name="Churcher C.M."/>
            <person name="Collins M."/>
            <person name="Connor R."/>
            <person name="Cronin A."/>
            <person name="Davis P."/>
            <person name="Feltwell T."/>
            <person name="Fraser A."/>
            <person name="Gentles S."/>
            <person name="Goble A."/>
            <person name="Hamlin N."/>
            <person name="Harris D.E."/>
            <person name="Hidalgo J."/>
            <person name="Hodgson G."/>
            <person name="Holroyd S."/>
            <person name="Hornsby T."/>
            <person name="Howarth S."/>
            <person name="Huckle E.J."/>
            <person name="Hunt S."/>
            <person name="Jagels K."/>
            <person name="James K.D."/>
            <person name="Jones L."/>
            <person name="Jones M."/>
            <person name="Leather S."/>
            <person name="McDonald S."/>
            <person name="McLean J."/>
            <person name="Mooney P."/>
            <person name="Moule S."/>
            <person name="Mungall K.L."/>
            <person name="Murphy L.D."/>
            <person name="Niblett D."/>
            <person name="Odell C."/>
            <person name="Oliver K."/>
            <person name="O'Neil S."/>
            <person name="Pearson D."/>
            <person name="Quail M.A."/>
            <person name="Rabbinowitsch E."/>
            <person name="Rutherford K.M."/>
            <person name="Rutter S."/>
            <person name="Saunders D."/>
            <person name="Seeger K."/>
            <person name="Sharp S."/>
            <person name="Skelton J."/>
            <person name="Simmonds M.N."/>
            <person name="Squares R."/>
            <person name="Squares S."/>
            <person name="Stevens K."/>
            <person name="Taylor K."/>
            <person name="Taylor R.G."/>
            <person name="Tivey A."/>
            <person name="Walsh S.V."/>
            <person name="Warren T."/>
            <person name="Whitehead S."/>
            <person name="Woodward J.R."/>
            <person name="Volckaert G."/>
            <person name="Aert R."/>
            <person name="Robben J."/>
            <person name="Grymonprez B."/>
            <person name="Weltjens I."/>
            <person name="Vanstreels E."/>
            <person name="Rieger M."/>
            <person name="Schaefer M."/>
            <person name="Mueller-Auer S."/>
            <person name="Gabel C."/>
            <person name="Fuchs M."/>
            <person name="Duesterhoeft A."/>
            <person name="Fritzc C."/>
            <person name="Holzer E."/>
            <person name="Moestl D."/>
            <person name="Hilbert H."/>
            <person name="Borzym K."/>
            <person name="Langer I."/>
            <person name="Beck A."/>
            <person name="Lehrach H."/>
            <person name="Reinhardt R."/>
            <person name="Pohl T.M."/>
            <person name="Eger P."/>
            <person name="Zimmermann W."/>
            <person name="Wedler H."/>
            <person name="Wambutt R."/>
            <person name="Purnelle B."/>
            <person name="Goffeau A."/>
            <person name="Cadieu E."/>
            <person name="Dreano S."/>
            <person name="Gloux S."/>
            <person name="Lelaure V."/>
            <person name="Mottier S."/>
            <person name="Galibert F."/>
            <person name="Aves S.J."/>
            <person name="Xiang Z."/>
            <person name="Hunt C."/>
            <person name="Moore K."/>
            <person name="Hurst S.M."/>
            <person name="Lucas M."/>
            <person name="Rochet M."/>
            <person name="Gaillardin C."/>
            <person name="Tallada V.A."/>
            <person name="Garzon A."/>
            <person name="Thode G."/>
            <person name="Daga R.R."/>
            <person name="Cruzado L."/>
            <person name="Jimenez J."/>
            <person name="Sanchez M."/>
            <person name="del Rey F."/>
            <person name="Benito J."/>
            <person name="Dominguez A."/>
            <person name="Revuelta J.L."/>
            <person name="Moreno S."/>
            <person name="Armstrong J."/>
            <person name="Forsburg S.L."/>
            <person name="Cerutti L."/>
            <person name="Lowe T."/>
            <person name="McCombie W.R."/>
            <person name="Paulsen I."/>
            <person name="Potashkin J."/>
            <person name="Shpakovski G.V."/>
            <person name="Ussery D."/>
            <person name="Barrell B.G."/>
            <person name="Nurse P."/>
        </authorList>
    </citation>
    <scope>NUCLEOTIDE SEQUENCE [LARGE SCALE GENOMIC DNA]</scope>
    <source>
        <strain>972 / ATCC 24843</strain>
    </source>
</reference>
<reference key="2">
    <citation type="journal article" date="2005" name="Curr. Biol.">
        <title>A large-scale screen in S. pombe identifies seven novel genes required for critical meiotic events.</title>
        <authorList>
            <person name="Martin-Castellanos C."/>
            <person name="Blanco M."/>
            <person name="Rozalen A.E."/>
            <person name="Perez-Hidalgo L."/>
            <person name="Garcia A.I."/>
            <person name="Conde F."/>
            <person name="Mata J."/>
            <person name="Ellermeier C."/>
            <person name="Davis L."/>
            <person name="San-Segundo P."/>
            <person name="Smith G.R."/>
            <person name="Moreno S."/>
        </authorList>
    </citation>
    <scope>FUNCTION IN MEIOSIS</scope>
</reference>
<reference key="3">
    <citation type="journal article" date="2006" name="Nat. Biotechnol.">
        <title>ORFeome cloning and global analysis of protein localization in the fission yeast Schizosaccharomyces pombe.</title>
        <authorList>
            <person name="Matsuyama A."/>
            <person name="Arai R."/>
            <person name="Yashiroda Y."/>
            <person name="Shirai A."/>
            <person name="Kamata A."/>
            <person name="Sekido S."/>
            <person name="Kobayashi Y."/>
            <person name="Hashimoto A."/>
            <person name="Hamamoto M."/>
            <person name="Hiraoka Y."/>
            <person name="Horinouchi S."/>
            <person name="Yoshida M."/>
        </authorList>
    </citation>
    <scope>SUBCELLULAR LOCATION [LARGE SCALE ANALYSIS]</scope>
</reference>
<comment type="function">
    <text evidence="1">Has a role in meiosis.</text>
</comment>
<comment type="subcellular location">
    <subcellularLocation>
        <location evidence="2">Cytoplasm</location>
    </subcellularLocation>
</comment>
<proteinExistence type="evidence at protein level"/>
<name>MUG74_SCHPO</name>
<protein>
    <recommendedName>
        <fullName>Meiotically up-regulated gene 74 protein</fullName>
    </recommendedName>
</protein>
<sequence length="285" mass="32723">MKKHKSSIKCFKIDQISQQPETDLVFTKRSECKVKDELFSDKENSILCKQLKELDLVVSSNKEFLNEKTSDQISFLKPRETVVEKKLANGSIWPNETSHLDKSRDLSSHSNGLDALAMTPYIVKENNKTHLSPRGNYPSEAEKSCDFYGQPLHFYRENTSPCLYGSSLSNVFTEKSSDYRHGLGSPTSLVSSNTASKLHLGRKDIVKLSELRNCINSSKDSNQIQELENLLRKEKQRNTEHEKIIRRMKKELKELHSQFNFAKKLFISALSANQDILDKMNDEFN</sequence>
<feature type="chain" id="PRO_0000116643" description="Meiotically up-regulated gene 74 protein">
    <location>
        <begin position="1"/>
        <end position="285"/>
    </location>
</feature>
<keyword id="KW-0963">Cytoplasm</keyword>
<keyword id="KW-0469">Meiosis</keyword>
<keyword id="KW-1185">Reference proteome</keyword>
<organism>
    <name type="scientific">Schizosaccharomyces pombe (strain 972 / ATCC 24843)</name>
    <name type="common">Fission yeast</name>
    <dbReference type="NCBI Taxonomy" id="284812"/>
    <lineage>
        <taxon>Eukaryota</taxon>
        <taxon>Fungi</taxon>
        <taxon>Dikarya</taxon>
        <taxon>Ascomycota</taxon>
        <taxon>Taphrinomycotina</taxon>
        <taxon>Schizosaccharomycetes</taxon>
        <taxon>Schizosaccharomycetales</taxon>
        <taxon>Schizosaccharomycetaceae</taxon>
        <taxon>Schizosaccharomyces</taxon>
    </lineage>
</organism>
<dbReference type="EMBL" id="CU329670">
    <property type="protein sequence ID" value="CAB10001.2"/>
    <property type="molecule type" value="Genomic_DNA"/>
</dbReference>
<dbReference type="RefSeq" id="NP_594048.2">
    <property type="nucleotide sequence ID" value="NM_001019473.2"/>
</dbReference>
<dbReference type="SMR" id="P87299"/>
<dbReference type="PaxDb" id="4896-SPAC16A10.08c.1"/>
<dbReference type="EnsemblFungi" id="SPAC16A10.08c.1">
    <property type="protein sequence ID" value="SPAC16A10.08c.1:pep"/>
    <property type="gene ID" value="SPAC16A10.08c"/>
</dbReference>
<dbReference type="GeneID" id="2542321"/>
<dbReference type="KEGG" id="spo:2542321"/>
<dbReference type="PomBase" id="SPAC16A10.08c">
    <property type="gene designation" value="mug74"/>
</dbReference>
<dbReference type="VEuPathDB" id="FungiDB:SPAC16A10.08c"/>
<dbReference type="HOGENOM" id="CLU_977145_0_0_1"/>
<dbReference type="InParanoid" id="P87299"/>
<dbReference type="PRO" id="PR:P87299"/>
<dbReference type="Proteomes" id="UP000002485">
    <property type="component" value="Chromosome I"/>
</dbReference>
<dbReference type="GO" id="GO:0005737">
    <property type="term" value="C:cytoplasm"/>
    <property type="evidence" value="ECO:0007005"/>
    <property type="project" value="PomBase"/>
</dbReference>
<dbReference type="GO" id="GO:0051321">
    <property type="term" value="P:meiotic cell cycle"/>
    <property type="evidence" value="ECO:0007669"/>
    <property type="project" value="UniProtKB-KW"/>
</dbReference>
<accession>P87299</accession>
<accession>Q9HE03</accession>